<gene>
    <name type="primary">CHSB</name>
</gene>
<comment type="function">
    <text>The primary product of this enzyme is 4,2',4',6'-tetrahydroxychalcone (also termed naringenin-chalcone or chalcone) which can under specific conditions spontaneously isomerize into naringenin.</text>
</comment>
<comment type="catalytic activity">
    <reaction evidence="1">
        <text>(E)-4-coumaroyl-CoA + 3 malonyl-CoA + 3 H(+) = 2',4,4',6'-tetrahydroxychalcone + 3 CO2 + 4 CoA</text>
        <dbReference type="Rhea" id="RHEA:11128"/>
        <dbReference type="ChEBI" id="CHEBI:15378"/>
        <dbReference type="ChEBI" id="CHEBI:15413"/>
        <dbReference type="ChEBI" id="CHEBI:16526"/>
        <dbReference type="ChEBI" id="CHEBI:57287"/>
        <dbReference type="ChEBI" id="CHEBI:57384"/>
        <dbReference type="ChEBI" id="CHEBI:85008"/>
        <dbReference type="EC" id="2.3.1.74"/>
    </reaction>
</comment>
<comment type="pathway">
    <text>Secondary metabolite biosynthesis; flavonoid biosynthesis.</text>
</comment>
<comment type="similarity">
    <text evidence="2">Belongs to the thiolase-like superfamily. Chalcone/stilbene synthases family.</text>
</comment>
<reference key="1">
    <citation type="journal article" date="1995" name="Proc. Natl. Acad. Sci. U.S.A.">
        <title>Evolution of the chalcone synthase gene family in the genus Ipomoea.</title>
        <authorList>
            <person name="Durbin M.L."/>
            <person name="Learn G.H."/>
            <person name="Huttley G.A."/>
            <person name="Clegg M.T."/>
        </authorList>
    </citation>
    <scope>NUCLEOTIDE SEQUENCE [GENOMIC DNA]</scope>
</reference>
<dbReference type="EC" id="2.3.1.74"/>
<dbReference type="EMBL" id="U15942">
    <property type="protein sequence ID" value="AAC49027.1"/>
    <property type="molecule type" value="Genomic_DNA"/>
</dbReference>
<dbReference type="SMR" id="P48394"/>
<dbReference type="UniPathway" id="UPA00154"/>
<dbReference type="GO" id="GO:0016210">
    <property type="term" value="F:naringenin-chalcone synthase activity"/>
    <property type="evidence" value="ECO:0007669"/>
    <property type="project" value="UniProtKB-EC"/>
</dbReference>
<dbReference type="GO" id="GO:0009813">
    <property type="term" value="P:flavonoid biosynthetic process"/>
    <property type="evidence" value="ECO:0007669"/>
    <property type="project" value="UniProtKB-UniPathway"/>
</dbReference>
<dbReference type="GO" id="GO:0030639">
    <property type="term" value="P:polyketide biosynthetic process"/>
    <property type="evidence" value="ECO:0007669"/>
    <property type="project" value="TreeGrafter"/>
</dbReference>
<dbReference type="CDD" id="cd00831">
    <property type="entry name" value="CHS_like"/>
    <property type="match status" value="1"/>
</dbReference>
<dbReference type="FunFam" id="3.40.47.10:FF:000014">
    <property type="entry name" value="Chalcone synthase 1"/>
    <property type="match status" value="1"/>
</dbReference>
<dbReference type="FunFam" id="3.40.47.10:FF:000025">
    <property type="entry name" value="Chalcone synthase 2"/>
    <property type="match status" value="1"/>
</dbReference>
<dbReference type="Gene3D" id="3.40.47.10">
    <property type="match status" value="2"/>
</dbReference>
<dbReference type="InterPro" id="IPR012328">
    <property type="entry name" value="Chalcone/stilbene_synt_C"/>
</dbReference>
<dbReference type="InterPro" id="IPR001099">
    <property type="entry name" value="Chalcone/stilbene_synt_N"/>
</dbReference>
<dbReference type="InterPro" id="IPR018088">
    <property type="entry name" value="Chalcone/stilbene_synthase_AS"/>
</dbReference>
<dbReference type="InterPro" id="IPR011141">
    <property type="entry name" value="Polyketide_synthase_type-III"/>
</dbReference>
<dbReference type="InterPro" id="IPR016039">
    <property type="entry name" value="Thiolase-like"/>
</dbReference>
<dbReference type="PANTHER" id="PTHR11877:SF104">
    <property type="entry name" value="CHALCONE SYNTHASE"/>
    <property type="match status" value="1"/>
</dbReference>
<dbReference type="PANTHER" id="PTHR11877">
    <property type="entry name" value="HYDROXYMETHYLGLUTARYL-COA SYNTHASE"/>
    <property type="match status" value="1"/>
</dbReference>
<dbReference type="Pfam" id="PF02797">
    <property type="entry name" value="Chal_sti_synt_C"/>
    <property type="match status" value="1"/>
</dbReference>
<dbReference type="Pfam" id="PF00195">
    <property type="entry name" value="Chal_sti_synt_N"/>
    <property type="match status" value="1"/>
</dbReference>
<dbReference type="PIRSF" id="PIRSF000451">
    <property type="entry name" value="PKS_III"/>
    <property type="match status" value="1"/>
</dbReference>
<dbReference type="SUPFAM" id="SSF53901">
    <property type="entry name" value="Thiolase-like"/>
    <property type="match status" value="2"/>
</dbReference>
<dbReference type="PROSITE" id="PS00441">
    <property type="entry name" value="CHALCONE_SYNTH"/>
    <property type="match status" value="1"/>
</dbReference>
<evidence type="ECO:0000255" key="1">
    <source>
        <dbReference type="PROSITE-ProRule" id="PRU10023"/>
    </source>
</evidence>
<evidence type="ECO:0000305" key="2"/>
<sequence length="363" mass="40413">MCTTVTVLTDTWSRREKRFEGHAKILAIGTATPANWVDQTTYPDFYFRITNSQHLLDHKEKFRRICNKSKIRKRHMILTEELLKKNPNLCTYNDASLNTRQDILVSEVPKLGKEAAMKAIKEWGRPISEITHLVFCTTSGVDMPGADFQLTKLLGLNSSVKRLMMYQQGCNAGAAMLRLAKDVAENNKGARVLVVCSEVMLSVFRGPSLQQEDNLLAQCLFGDGSAALIVGTDPRPGLETPLFELISAAQTIIPNTDSHLKLHVREMGLTFHCSKAVPTFITQNVEDCLVKAFEPYGISDWNSIFWVLHPGGNAIVDGVEETLGLAPEKLRASRDVLSGYGNLTSACVLFILDEVRKKSKKDE</sequence>
<accession>P48394</accession>
<protein>
    <recommendedName>
        <fullName>Chalcone synthase B</fullName>
        <ecNumber>2.3.1.74</ecNumber>
    </recommendedName>
    <alternativeName>
        <fullName>Naringenin-chalcone synthase B</fullName>
        <shortName>CHS-B</shortName>
    </alternativeName>
</protein>
<proteinExistence type="inferred from homology"/>
<organism>
    <name type="scientific">Ipomoea cordatotriloba</name>
    <name type="common">Tievine</name>
    <dbReference type="NCBI Taxonomy" id="35882"/>
    <lineage>
        <taxon>Eukaryota</taxon>
        <taxon>Viridiplantae</taxon>
        <taxon>Streptophyta</taxon>
        <taxon>Embryophyta</taxon>
        <taxon>Tracheophyta</taxon>
        <taxon>Spermatophyta</taxon>
        <taxon>Magnoliopsida</taxon>
        <taxon>eudicotyledons</taxon>
        <taxon>Gunneridae</taxon>
        <taxon>Pentapetalae</taxon>
        <taxon>asterids</taxon>
        <taxon>lamiids</taxon>
        <taxon>Solanales</taxon>
        <taxon>Convolvulaceae</taxon>
        <taxon>Ipomoeeae</taxon>
        <taxon>Ipomoea</taxon>
    </lineage>
</organism>
<keyword id="KW-0012">Acyltransferase</keyword>
<keyword id="KW-0284">Flavonoid biosynthesis</keyword>
<keyword id="KW-0808">Transferase</keyword>
<name>CHSB_IPOCO</name>
<feature type="chain" id="PRO_0000215991" description="Chalcone synthase B">
    <location>
        <begin position="1"/>
        <end position="363" status="greater than"/>
    </location>
</feature>
<feature type="active site" evidence="1">
    <location>
        <position position="170"/>
    </location>
</feature>
<feature type="non-terminal residue">
    <location>
        <position position="363"/>
    </location>
</feature>